<sequence length="89" mass="10248">MALDSAKKQEIISKFAEHEGDTGSPAVQIALLSERISYLTEHLKEHKKDHSSRLGLLKLVGQRKRLLNYLKRKDYEKYTQVIKELGIRG</sequence>
<keyword id="KW-1185">Reference proteome</keyword>
<keyword id="KW-0687">Ribonucleoprotein</keyword>
<keyword id="KW-0689">Ribosomal protein</keyword>
<keyword id="KW-0694">RNA-binding</keyword>
<keyword id="KW-0699">rRNA-binding</keyword>
<comment type="function">
    <text evidence="1">One of the primary rRNA binding proteins, it binds directly to 16S rRNA where it helps nucleate assembly of the platform of the 30S subunit by binding and bridging several RNA helices of the 16S rRNA.</text>
</comment>
<comment type="function">
    <text evidence="1">Forms an intersubunit bridge (bridge B4) with the 23S rRNA of the 50S subunit in the ribosome.</text>
</comment>
<comment type="subunit">
    <text evidence="1">Part of the 30S ribosomal subunit. Forms a bridge to the 50S subunit in the 70S ribosome, contacting the 23S rRNA.</text>
</comment>
<comment type="similarity">
    <text evidence="1">Belongs to the universal ribosomal protein uS15 family.</text>
</comment>
<gene>
    <name evidence="1" type="primary">rpsO</name>
    <name type="ordered locus">NIS_1124</name>
</gene>
<feature type="chain" id="PRO_1000054828" description="Small ribosomal subunit protein uS15">
    <location>
        <begin position="1"/>
        <end position="89"/>
    </location>
</feature>
<evidence type="ECO:0000255" key="1">
    <source>
        <dbReference type="HAMAP-Rule" id="MF_01343"/>
    </source>
</evidence>
<evidence type="ECO:0000305" key="2"/>
<dbReference type="EMBL" id="AP009178">
    <property type="protein sequence ID" value="BAF70233.1"/>
    <property type="molecule type" value="Genomic_DNA"/>
</dbReference>
<dbReference type="RefSeq" id="WP_012082496.1">
    <property type="nucleotide sequence ID" value="NC_009662.1"/>
</dbReference>
<dbReference type="SMR" id="A6Q424"/>
<dbReference type="FunCoup" id="A6Q424">
    <property type="interactions" value="446"/>
</dbReference>
<dbReference type="STRING" id="387092.NIS_1124"/>
<dbReference type="KEGG" id="nis:NIS_1124"/>
<dbReference type="eggNOG" id="COG0184">
    <property type="taxonomic scope" value="Bacteria"/>
</dbReference>
<dbReference type="HOGENOM" id="CLU_148518_0_0_7"/>
<dbReference type="InParanoid" id="A6Q424"/>
<dbReference type="OrthoDB" id="9799262at2"/>
<dbReference type="Proteomes" id="UP000001118">
    <property type="component" value="Chromosome"/>
</dbReference>
<dbReference type="GO" id="GO:0022627">
    <property type="term" value="C:cytosolic small ribosomal subunit"/>
    <property type="evidence" value="ECO:0007669"/>
    <property type="project" value="TreeGrafter"/>
</dbReference>
<dbReference type="GO" id="GO:0019843">
    <property type="term" value="F:rRNA binding"/>
    <property type="evidence" value="ECO:0007669"/>
    <property type="project" value="UniProtKB-UniRule"/>
</dbReference>
<dbReference type="GO" id="GO:0003735">
    <property type="term" value="F:structural constituent of ribosome"/>
    <property type="evidence" value="ECO:0007669"/>
    <property type="project" value="InterPro"/>
</dbReference>
<dbReference type="GO" id="GO:0006412">
    <property type="term" value="P:translation"/>
    <property type="evidence" value="ECO:0007669"/>
    <property type="project" value="UniProtKB-UniRule"/>
</dbReference>
<dbReference type="CDD" id="cd00353">
    <property type="entry name" value="Ribosomal_S15p_S13e"/>
    <property type="match status" value="1"/>
</dbReference>
<dbReference type="FunFam" id="1.10.287.10:FF:000002">
    <property type="entry name" value="30S ribosomal protein S15"/>
    <property type="match status" value="1"/>
</dbReference>
<dbReference type="Gene3D" id="6.10.250.3130">
    <property type="match status" value="1"/>
</dbReference>
<dbReference type="Gene3D" id="1.10.287.10">
    <property type="entry name" value="S15/NS1, RNA-binding"/>
    <property type="match status" value="1"/>
</dbReference>
<dbReference type="HAMAP" id="MF_01343_B">
    <property type="entry name" value="Ribosomal_uS15_B"/>
    <property type="match status" value="1"/>
</dbReference>
<dbReference type="InterPro" id="IPR000589">
    <property type="entry name" value="Ribosomal_uS15"/>
</dbReference>
<dbReference type="InterPro" id="IPR005290">
    <property type="entry name" value="Ribosomal_uS15_bac-type"/>
</dbReference>
<dbReference type="InterPro" id="IPR009068">
    <property type="entry name" value="uS15_NS1_RNA-bd_sf"/>
</dbReference>
<dbReference type="NCBIfam" id="TIGR00952">
    <property type="entry name" value="S15_bact"/>
    <property type="match status" value="1"/>
</dbReference>
<dbReference type="PANTHER" id="PTHR23321">
    <property type="entry name" value="RIBOSOMAL PROTEIN S15, BACTERIAL AND ORGANELLAR"/>
    <property type="match status" value="1"/>
</dbReference>
<dbReference type="PANTHER" id="PTHR23321:SF26">
    <property type="entry name" value="SMALL RIBOSOMAL SUBUNIT PROTEIN US15M"/>
    <property type="match status" value="1"/>
</dbReference>
<dbReference type="Pfam" id="PF00312">
    <property type="entry name" value="Ribosomal_S15"/>
    <property type="match status" value="1"/>
</dbReference>
<dbReference type="SMART" id="SM01387">
    <property type="entry name" value="Ribosomal_S15"/>
    <property type="match status" value="1"/>
</dbReference>
<dbReference type="SUPFAM" id="SSF47060">
    <property type="entry name" value="S15/NS1 RNA-binding domain"/>
    <property type="match status" value="1"/>
</dbReference>
<dbReference type="PROSITE" id="PS00362">
    <property type="entry name" value="RIBOSOMAL_S15"/>
    <property type="match status" value="1"/>
</dbReference>
<proteinExistence type="inferred from homology"/>
<reference key="1">
    <citation type="journal article" date="2007" name="Proc. Natl. Acad. Sci. U.S.A.">
        <title>Deep-sea vent epsilon-proteobacterial genomes provide insights into emergence of pathogens.</title>
        <authorList>
            <person name="Nakagawa S."/>
            <person name="Takaki Y."/>
            <person name="Shimamura S."/>
            <person name="Reysenbach A.-L."/>
            <person name="Takai K."/>
            <person name="Horikoshi K."/>
        </authorList>
    </citation>
    <scope>NUCLEOTIDE SEQUENCE [LARGE SCALE GENOMIC DNA]</scope>
    <source>
        <strain>SB155-2</strain>
    </source>
</reference>
<organism>
    <name type="scientific">Nitratiruptor sp. (strain SB155-2)</name>
    <dbReference type="NCBI Taxonomy" id="387092"/>
    <lineage>
        <taxon>Bacteria</taxon>
        <taxon>Pseudomonadati</taxon>
        <taxon>Campylobacterota</taxon>
        <taxon>Epsilonproteobacteria</taxon>
        <taxon>Nautiliales</taxon>
        <taxon>Nitratiruptoraceae</taxon>
        <taxon>Nitratiruptor</taxon>
    </lineage>
</organism>
<name>RS15_NITSB</name>
<accession>A6Q424</accession>
<protein>
    <recommendedName>
        <fullName evidence="1">Small ribosomal subunit protein uS15</fullName>
    </recommendedName>
    <alternativeName>
        <fullName evidence="2">30S ribosomal protein S15</fullName>
    </alternativeName>
</protein>